<proteinExistence type="predicted"/>
<organism>
    <name type="scientific">Chlamydia pneumoniae</name>
    <name type="common">Chlamydophila pneumoniae</name>
    <dbReference type="NCBI Taxonomy" id="83558"/>
    <lineage>
        <taxon>Bacteria</taxon>
        <taxon>Pseudomonadati</taxon>
        <taxon>Chlamydiota</taxon>
        <taxon>Chlamydiia</taxon>
        <taxon>Chlamydiales</taxon>
        <taxon>Chlamydiaceae</taxon>
        <taxon>Chlamydia/Chlamydophila group</taxon>
        <taxon>Chlamydia</taxon>
    </lineage>
</organism>
<name>LTUB_CHLPN</name>
<gene>
    <name type="primary">ltuB</name>
    <name type="ordered locus">CPn_0333</name>
    <name type="ordered locus">CP_0425</name>
    <name type="ordered locus">CPj0333</name>
    <name type="ordered locus">CpB0342</name>
</gene>
<dbReference type="EMBL" id="AE001363">
    <property type="protein sequence ID" value="AAD18482.1"/>
    <property type="molecule type" value="Genomic_DNA"/>
</dbReference>
<dbReference type="EMBL" id="AE002161">
    <property type="protein sequence ID" value="AAF38268.1"/>
    <property type="molecule type" value="Genomic_DNA"/>
</dbReference>
<dbReference type="EMBL" id="BA000008">
    <property type="protein sequence ID" value="BAA98543.1"/>
    <property type="molecule type" value="Genomic_DNA"/>
</dbReference>
<dbReference type="EMBL" id="AE009440">
    <property type="protein sequence ID" value="AAP98275.1"/>
    <property type="molecule type" value="Genomic_DNA"/>
</dbReference>
<dbReference type="PIR" id="C72090">
    <property type="entry name" value="C72090"/>
</dbReference>
<dbReference type="PIR" id="E86532">
    <property type="entry name" value="E86532"/>
</dbReference>
<dbReference type="RefSeq" id="NP_224538.1">
    <property type="nucleotide sequence ID" value="NC_000922.1"/>
</dbReference>
<dbReference type="RefSeq" id="WP_010882981.1">
    <property type="nucleotide sequence ID" value="NZ_LN847257.1"/>
</dbReference>
<dbReference type="SMR" id="Q9Z8K5"/>
<dbReference type="STRING" id="406984.CPK_ORF00842"/>
<dbReference type="GeneID" id="45050381"/>
<dbReference type="KEGG" id="cpa:CP_0425"/>
<dbReference type="KEGG" id="cpj:CPj0333"/>
<dbReference type="KEGG" id="cpn:CPn_0333"/>
<dbReference type="KEGG" id="cpt:CpB0342"/>
<dbReference type="PATRIC" id="fig|115713.3.peg.368"/>
<dbReference type="HOGENOM" id="CLU_182837_0_0_0"/>
<dbReference type="OMA" id="KKHHYST"/>
<dbReference type="OrthoDB" id="19032at2"/>
<dbReference type="Proteomes" id="UP000000583">
    <property type="component" value="Chromosome"/>
</dbReference>
<dbReference type="Proteomes" id="UP000000801">
    <property type="component" value="Chromosome"/>
</dbReference>
<dbReference type="InterPro" id="IPR020502">
    <property type="entry name" value="LtuB"/>
</dbReference>
<dbReference type="Pfam" id="PF17455">
    <property type="entry name" value="LtuB"/>
    <property type="match status" value="1"/>
</dbReference>
<sequence>MGKPKKSRTDRALAQEIQKKSTEVLKKPARIKAKNRRKFLIAKEQKTLKHRAQEYDQLVRSLLDSQKKDTDKVLIFNYENGFVFTDKDHFSKYSIRL</sequence>
<protein>
    <recommendedName>
        <fullName>Late transcription unit B protein</fullName>
    </recommendedName>
</protein>
<reference key="1">
    <citation type="journal article" date="1999" name="Nat. Genet.">
        <title>Comparative genomes of Chlamydia pneumoniae and C. trachomatis.</title>
        <authorList>
            <person name="Kalman S."/>
            <person name="Mitchell W.P."/>
            <person name="Marathe R."/>
            <person name="Lammel C.J."/>
            <person name="Fan J."/>
            <person name="Hyman R.W."/>
            <person name="Olinger L."/>
            <person name="Grimwood J."/>
            <person name="Davis R.W."/>
            <person name="Stephens R.S."/>
        </authorList>
    </citation>
    <scope>NUCLEOTIDE SEQUENCE [LARGE SCALE GENOMIC DNA]</scope>
    <source>
        <strain>CWL029</strain>
    </source>
</reference>
<reference key="2">
    <citation type="journal article" date="2000" name="Nucleic Acids Res.">
        <title>Genome sequences of Chlamydia trachomatis MoPn and Chlamydia pneumoniae AR39.</title>
        <authorList>
            <person name="Read T.D."/>
            <person name="Brunham R.C."/>
            <person name="Shen C."/>
            <person name="Gill S.R."/>
            <person name="Heidelberg J.F."/>
            <person name="White O."/>
            <person name="Hickey E.K."/>
            <person name="Peterson J.D."/>
            <person name="Utterback T.R."/>
            <person name="Berry K.J."/>
            <person name="Bass S."/>
            <person name="Linher K.D."/>
            <person name="Weidman J.F."/>
            <person name="Khouri H.M."/>
            <person name="Craven B."/>
            <person name="Bowman C."/>
            <person name="Dodson R.J."/>
            <person name="Gwinn M.L."/>
            <person name="Nelson W.C."/>
            <person name="DeBoy R.T."/>
            <person name="Kolonay J.F."/>
            <person name="McClarty G."/>
            <person name="Salzberg S.L."/>
            <person name="Eisen J.A."/>
            <person name="Fraser C.M."/>
        </authorList>
    </citation>
    <scope>NUCLEOTIDE SEQUENCE [LARGE SCALE GENOMIC DNA]</scope>
    <source>
        <strain>AR39</strain>
    </source>
</reference>
<reference key="3">
    <citation type="journal article" date="2000" name="Nucleic Acids Res.">
        <title>Comparison of whole genome sequences of Chlamydia pneumoniae J138 from Japan and CWL029 from USA.</title>
        <authorList>
            <person name="Shirai M."/>
            <person name="Hirakawa H."/>
            <person name="Kimoto M."/>
            <person name="Tabuchi M."/>
            <person name="Kishi F."/>
            <person name="Ouchi K."/>
            <person name="Shiba T."/>
            <person name="Ishii K."/>
            <person name="Hattori M."/>
            <person name="Kuhara S."/>
            <person name="Nakazawa T."/>
        </authorList>
    </citation>
    <scope>NUCLEOTIDE SEQUENCE [LARGE SCALE GENOMIC DNA]</scope>
    <source>
        <strain>J138</strain>
    </source>
</reference>
<reference key="4">
    <citation type="submission" date="2002-05" db="EMBL/GenBank/DDBJ databases">
        <title>The genome sequence of Chlamydia pneumoniae TW183 and comparison with other Chlamydia strains based on whole genome sequence analysis.</title>
        <authorList>
            <person name="Geng M.M."/>
            <person name="Schuhmacher A."/>
            <person name="Muehldorfer I."/>
            <person name="Bensch K.W."/>
            <person name="Schaefer K.P."/>
            <person name="Schneider S."/>
            <person name="Pohl T."/>
            <person name="Essig A."/>
            <person name="Marre R."/>
            <person name="Melchers K."/>
        </authorList>
    </citation>
    <scope>NUCLEOTIDE SEQUENCE [LARGE SCALE GENOMIC DNA]</scope>
    <source>
        <strain>TW-183</strain>
    </source>
</reference>
<feature type="chain" id="PRO_0000084520" description="Late transcription unit B protein">
    <location>
        <begin position="1"/>
        <end position="97"/>
    </location>
</feature>
<accession>Q9Z8K5</accession>